<proteinExistence type="inferred from homology"/>
<gene>
    <name evidence="1" type="primary">groEL</name>
    <name evidence="1" type="synonym">groL</name>
</gene>
<accession>P51349</accession>
<comment type="function">
    <text evidence="1">Together with its co-chaperonin GroES, plays an essential role in assisting protein folding. The GroEL-GroES system forms a nano-cage that allows encapsulation of the non-native substrate proteins and provides a physical environment optimized to promote and accelerate protein folding.</text>
</comment>
<comment type="catalytic activity">
    <reaction evidence="1">
        <text>ATP + H2O + a folded polypeptide = ADP + phosphate + an unfolded polypeptide.</text>
        <dbReference type="EC" id="5.6.1.7"/>
    </reaction>
</comment>
<comment type="subunit">
    <text evidence="1">Forms a cylinder of 14 subunits composed of two heptameric rings stacked back-to-back. Interacts with the co-chaperonin GroES.</text>
</comment>
<comment type="subcellular location">
    <subcellularLocation>
        <location evidence="1">Plastid</location>
        <location evidence="1">Chloroplast</location>
    </subcellularLocation>
</comment>
<comment type="similarity">
    <text evidence="1">Belongs to the chaperonin (HSP60) family.</text>
</comment>
<dbReference type="EC" id="5.6.1.7" evidence="1"/>
<dbReference type="EMBL" id="U38804">
    <property type="protein sequence ID" value="AAC08235.1"/>
    <property type="molecule type" value="Genomic_DNA"/>
</dbReference>
<dbReference type="PIR" id="S73270">
    <property type="entry name" value="S73270"/>
</dbReference>
<dbReference type="RefSeq" id="NP_053959.1">
    <property type="nucleotide sequence ID" value="NC_000925.1"/>
</dbReference>
<dbReference type="SMR" id="P51349"/>
<dbReference type="GeneID" id="809985"/>
<dbReference type="GO" id="GO:0009507">
    <property type="term" value="C:chloroplast"/>
    <property type="evidence" value="ECO:0007669"/>
    <property type="project" value="UniProtKB-SubCell"/>
</dbReference>
<dbReference type="GO" id="GO:0005524">
    <property type="term" value="F:ATP binding"/>
    <property type="evidence" value="ECO:0007669"/>
    <property type="project" value="UniProtKB-UniRule"/>
</dbReference>
<dbReference type="GO" id="GO:0140662">
    <property type="term" value="F:ATP-dependent protein folding chaperone"/>
    <property type="evidence" value="ECO:0007669"/>
    <property type="project" value="InterPro"/>
</dbReference>
<dbReference type="GO" id="GO:0016853">
    <property type="term" value="F:isomerase activity"/>
    <property type="evidence" value="ECO:0007669"/>
    <property type="project" value="UniProtKB-KW"/>
</dbReference>
<dbReference type="GO" id="GO:0051082">
    <property type="term" value="F:unfolded protein binding"/>
    <property type="evidence" value="ECO:0007669"/>
    <property type="project" value="UniProtKB-UniRule"/>
</dbReference>
<dbReference type="GO" id="GO:0042026">
    <property type="term" value="P:protein refolding"/>
    <property type="evidence" value="ECO:0007669"/>
    <property type="project" value="UniProtKB-UniRule"/>
</dbReference>
<dbReference type="CDD" id="cd03344">
    <property type="entry name" value="GroEL"/>
    <property type="match status" value="1"/>
</dbReference>
<dbReference type="FunFam" id="3.50.7.10:FF:000001">
    <property type="entry name" value="60 kDa chaperonin"/>
    <property type="match status" value="1"/>
</dbReference>
<dbReference type="Gene3D" id="3.50.7.10">
    <property type="entry name" value="GroEL"/>
    <property type="match status" value="1"/>
</dbReference>
<dbReference type="Gene3D" id="1.10.560.10">
    <property type="entry name" value="GroEL-like equatorial domain"/>
    <property type="match status" value="1"/>
</dbReference>
<dbReference type="Gene3D" id="3.30.260.10">
    <property type="entry name" value="TCP-1-like chaperonin intermediate domain"/>
    <property type="match status" value="1"/>
</dbReference>
<dbReference type="HAMAP" id="MF_00600">
    <property type="entry name" value="CH60"/>
    <property type="match status" value="1"/>
</dbReference>
<dbReference type="InterPro" id="IPR018370">
    <property type="entry name" value="Chaperonin_Cpn60_CS"/>
</dbReference>
<dbReference type="InterPro" id="IPR001844">
    <property type="entry name" value="Cpn60/GroEL"/>
</dbReference>
<dbReference type="InterPro" id="IPR002423">
    <property type="entry name" value="Cpn60/GroEL/TCP-1"/>
</dbReference>
<dbReference type="InterPro" id="IPR027409">
    <property type="entry name" value="GroEL-like_apical_dom_sf"/>
</dbReference>
<dbReference type="InterPro" id="IPR027413">
    <property type="entry name" value="GROEL-like_equatorial_sf"/>
</dbReference>
<dbReference type="InterPro" id="IPR027410">
    <property type="entry name" value="TCP-1-like_intermed_sf"/>
</dbReference>
<dbReference type="NCBIfam" id="TIGR02348">
    <property type="entry name" value="GroEL"/>
    <property type="match status" value="1"/>
</dbReference>
<dbReference type="NCBIfam" id="NF000592">
    <property type="entry name" value="PRK00013.1"/>
    <property type="match status" value="1"/>
</dbReference>
<dbReference type="NCBIfam" id="NF009487">
    <property type="entry name" value="PRK12849.1"/>
    <property type="match status" value="1"/>
</dbReference>
<dbReference type="NCBIfam" id="NF009488">
    <property type="entry name" value="PRK12850.1"/>
    <property type="match status" value="1"/>
</dbReference>
<dbReference type="NCBIfam" id="NF009489">
    <property type="entry name" value="PRK12851.1"/>
    <property type="match status" value="1"/>
</dbReference>
<dbReference type="PANTHER" id="PTHR45633">
    <property type="entry name" value="60 KDA HEAT SHOCK PROTEIN, MITOCHONDRIAL"/>
    <property type="match status" value="1"/>
</dbReference>
<dbReference type="Pfam" id="PF00118">
    <property type="entry name" value="Cpn60_TCP1"/>
    <property type="match status" value="1"/>
</dbReference>
<dbReference type="PRINTS" id="PR00298">
    <property type="entry name" value="CHAPERONIN60"/>
</dbReference>
<dbReference type="SUPFAM" id="SSF52029">
    <property type="entry name" value="GroEL apical domain-like"/>
    <property type="match status" value="1"/>
</dbReference>
<dbReference type="SUPFAM" id="SSF48592">
    <property type="entry name" value="GroEL equatorial domain-like"/>
    <property type="match status" value="2"/>
</dbReference>
<dbReference type="PROSITE" id="PS00296">
    <property type="entry name" value="CHAPERONINS_CPN60"/>
    <property type="match status" value="1"/>
</dbReference>
<geneLocation type="chloroplast"/>
<protein>
    <recommendedName>
        <fullName evidence="1">Chaperonin GroEL, chloroplastic</fullName>
        <ecNumber evidence="1">5.6.1.7</ecNumber>
    </recommendedName>
    <alternativeName>
        <fullName evidence="1">60 kDa chaperonin</fullName>
    </alternativeName>
    <alternativeName>
        <fullName evidence="1">Chaperonin-60</fullName>
        <shortName evidence="1">Cpn60</shortName>
    </alternativeName>
</protein>
<keyword id="KW-0067">ATP-binding</keyword>
<keyword id="KW-0143">Chaperone</keyword>
<keyword id="KW-0150">Chloroplast</keyword>
<keyword id="KW-0413">Isomerase</keyword>
<keyword id="KW-0547">Nucleotide-binding</keyword>
<keyword id="KW-0934">Plastid</keyword>
<feature type="chain" id="PRO_0000063627" description="Chaperonin GroEL, chloroplastic">
    <location>
        <begin position="1"/>
        <end position="528"/>
    </location>
</feature>
<feature type="binding site" evidence="1">
    <location>
        <begin position="29"/>
        <end position="32"/>
    </location>
    <ligand>
        <name>ATP</name>
        <dbReference type="ChEBI" id="CHEBI:30616"/>
    </ligand>
</feature>
<feature type="binding site" evidence="1">
    <location>
        <begin position="86"/>
        <end position="90"/>
    </location>
    <ligand>
        <name>ATP</name>
        <dbReference type="ChEBI" id="CHEBI:30616"/>
    </ligand>
</feature>
<feature type="binding site" evidence="1">
    <location>
        <position position="414"/>
    </location>
    <ligand>
        <name>ATP</name>
        <dbReference type="ChEBI" id="CHEBI:30616"/>
    </ligand>
</feature>
<feature type="binding site" evidence="1">
    <location>
        <position position="496"/>
    </location>
    <ligand>
        <name>ATP</name>
        <dbReference type="ChEBI" id="CHEBI:30616"/>
    </ligand>
</feature>
<name>CH60_PORPU</name>
<organism>
    <name type="scientific">Porphyra purpurea</name>
    <name type="common">Red seaweed</name>
    <name type="synonym">Ulva purpurea</name>
    <dbReference type="NCBI Taxonomy" id="2787"/>
    <lineage>
        <taxon>Eukaryota</taxon>
        <taxon>Rhodophyta</taxon>
        <taxon>Bangiophyceae</taxon>
        <taxon>Bangiales</taxon>
        <taxon>Bangiaceae</taxon>
        <taxon>Porphyra</taxon>
    </lineage>
</organism>
<reference key="1">
    <citation type="journal article" date="1995" name="Plant Mol. Biol. Rep.">
        <title>Complete nucleotide sequence of the Porphyra purpurea chloroplast genome.</title>
        <authorList>
            <person name="Reith M.E."/>
            <person name="Munholland J."/>
        </authorList>
    </citation>
    <scope>NUCLEOTIDE SEQUENCE [LARGE SCALE GENOMIC DNA]</scope>
    <source>
        <strain>Avonport</strain>
    </source>
</reference>
<sequence>MSKQILYQDDARKALEKGMDILTEAVSVTLGPKGRNVVLEKKFGAPQIVNDGVTIAKEISLEDHIENTGVALIRQAASKTNDVAGDGTTTATVLASAIVKQGMRNVAAGSNPMAIKKGIEKATNFVVSKIAEYAKPVEDTTAIVQVASISSGNDAEVGKMIADAIDRVGREGVISLEEGKSTSTSLEITEGMQFEKGFISPYFVTDLDRMEVLQENPFILFTDKKITLVQQELVPLLEQIAKTSKPLLIIAEDIEKEALATIVVNKLRGILNVVAVRAPGFGDRRKSLLEDMSILTGGQVITEDAGFSLDTVQLDMLGKARRVVVTKDSTTIIADGHEATVKSRCEQIKRQIETSDSLYEREKLQERLAKLSGGVAVIKVGAATETEMKDKKLRLEDAINATKAAIEEGIVPGGGSTNVHISGELFVWAKNNLFEDELIGALIVQRALTYPLRRIAFNAGDNGAVVVEKVKTNDFCIGYDASNGKIVNMYDAGIIDPAKVARSALQNATSIAAMVLTTECIVVDKLEA</sequence>
<evidence type="ECO:0000255" key="1">
    <source>
        <dbReference type="HAMAP-Rule" id="MF_00600"/>
    </source>
</evidence>